<gene>
    <name evidence="1" type="primary">grpE</name>
    <name type="ordered locus">OB1969</name>
</gene>
<name>GRPE_OCEIH</name>
<dbReference type="EMBL" id="BA000028">
    <property type="protein sequence ID" value="BAC13925.1"/>
    <property type="molecule type" value="Genomic_DNA"/>
</dbReference>
<dbReference type="RefSeq" id="WP_011066366.1">
    <property type="nucleotide sequence ID" value="NC_004193.1"/>
</dbReference>
<dbReference type="SMR" id="Q8CXD2"/>
<dbReference type="STRING" id="221109.gene:10734215"/>
<dbReference type="KEGG" id="oih:OB1969"/>
<dbReference type="eggNOG" id="COG0576">
    <property type="taxonomic scope" value="Bacteria"/>
</dbReference>
<dbReference type="HOGENOM" id="CLU_057217_5_2_9"/>
<dbReference type="OrthoDB" id="9812586at2"/>
<dbReference type="PhylomeDB" id="Q8CXD2"/>
<dbReference type="Proteomes" id="UP000000822">
    <property type="component" value="Chromosome"/>
</dbReference>
<dbReference type="GO" id="GO:0005737">
    <property type="term" value="C:cytoplasm"/>
    <property type="evidence" value="ECO:0007669"/>
    <property type="project" value="UniProtKB-SubCell"/>
</dbReference>
<dbReference type="GO" id="GO:0000774">
    <property type="term" value="F:adenyl-nucleotide exchange factor activity"/>
    <property type="evidence" value="ECO:0007669"/>
    <property type="project" value="InterPro"/>
</dbReference>
<dbReference type="GO" id="GO:0042803">
    <property type="term" value="F:protein homodimerization activity"/>
    <property type="evidence" value="ECO:0007669"/>
    <property type="project" value="InterPro"/>
</dbReference>
<dbReference type="GO" id="GO:0051087">
    <property type="term" value="F:protein-folding chaperone binding"/>
    <property type="evidence" value="ECO:0007669"/>
    <property type="project" value="InterPro"/>
</dbReference>
<dbReference type="GO" id="GO:0051082">
    <property type="term" value="F:unfolded protein binding"/>
    <property type="evidence" value="ECO:0007669"/>
    <property type="project" value="TreeGrafter"/>
</dbReference>
<dbReference type="GO" id="GO:0006457">
    <property type="term" value="P:protein folding"/>
    <property type="evidence" value="ECO:0007669"/>
    <property type="project" value="InterPro"/>
</dbReference>
<dbReference type="CDD" id="cd00446">
    <property type="entry name" value="GrpE"/>
    <property type="match status" value="1"/>
</dbReference>
<dbReference type="FunFam" id="2.30.22.10:FF:000001">
    <property type="entry name" value="Protein GrpE"/>
    <property type="match status" value="1"/>
</dbReference>
<dbReference type="Gene3D" id="3.90.20.20">
    <property type="match status" value="1"/>
</dbReference>
<dbReference type="Gene3D" id="2.30.22.10">
    <property type="entry name" value="Head domain of nucleotide exchange factor GrpE"/>
    <property type="match status" value="1"/>
</dbReference>
<dbReference type="HAMAP" id="MF_01151">
    <property type="entry name" value="GrpE"/>
    <property type="match status" value="1"/>
</dbReference>
<dbReference type="InterPro" id="IPR000740">
    <property type="entry name" value="GrpE"/>
</dbReference>
<dbReference type="InterPro" id="IPR013805">
    <property type="entry name" value="GrpE_coiled_coil"/>
</dbReference>
<dbReference type="InterPro" id="IPR009012">
    <property type="entry name" value="GrpE_head"/>
</dbReference>
<dbReference type="NCBIfam" id="NF010738">
    <property type="entry name" value="PRK14140.1"/>
    <property type="match status" value="1"/>
</dbReference>
<dbReference type="PANTHER" id="PTHR21237">
    <property type="entry name" value="GRPE PROTEIN"/>
    <property type="match status" value="1"/>
</dbReference>
<dbReference type="PANTHER" id="PTHR21237:SF23">
    <property type="entry name" value="GRPE PROTEIN HOMOLOG, MITOCHONDRIAL"/>
    <property type="match status" value="1"/>
</dbReference>
<dbReference type="Pfam" id="PF01025">
    <property type="entry name" value="GrpE"/>
    <property type="match status" value="1"/>
</dbReference>
<dbReference type="PRINTS" id="PR00773">
    <property type="entry name" value="GRPEPROTEIN"/>
</dbReference>
<dbReference type="SUPFAM" id="SSF58014">
    <property type="entry name" value="Coiled-coil domain of nucleotide exchange factor GrpE"/>
    <property type="match status" value="1"/>
</dbReference>
<dbReference type="SUPFAM" id="SSF51064">
    <property type="entry name" value="Head domain of nucleotide exchange factor GrpE"/>
    <property type="match status" value="1"/>
</dbReference>
<dbReference type="PROSITE" id="PS01071">
    <property type="entry name" value="GRPE"/>
    <property type="match status" value="1"/>
</dbReference>
<reference key="1">
    <citation type="journal article" date="2002" name="Nucleic Acids Res.">
        <title>Genome sequence of Oceanobacillus iheyensis isolated from the Iheya Ridge and its unexpected adaptive capabilities to extreme environments.</title>
        <authorList>
            <person name="Takami H."/>
            <person name="Takaki Y."/>
            <person name="Uchiyama I."/>
        </authorList>
    </citation>
    <scope>NUCLEOTIDE SEQUENCE [LARGE SCALE GENOMIC DNA]</scope>
    <source>
        <strain>DSM 14371 / CIP 107618 / JCM 11309 / KCTC 3954 / HTE831</strain>
    </source>
</reference>
<organism>
    <name type="scientific">Oceanobacillus iheyensis (strain DSM 14371 / CIP 107618 / JCM 11309 / KCTC 3954 / HTE831)</name>
    <dbReference type="NCBI Taxonomy" id="221109"/>
    <lineage>
        <taxon>Bacteria</taxon>
        <taxon>Bacillati</taxon>
        <taxon>Bacillota</taxon>
        <taxon>Bacilli</taxon>
        <taxon>Bacillales</taxon>
        <taxon>Bacillaceae</taxon>
        <taxon>Oceanobacillus</taxon>
    </lineage>
</organism>
<proteinExistence type="inferred from homology"/>
<evidence type="ECO:0000255" key="1">
    <source>
        <dbReference type="HAMAP-Rule" id="MF_01151"/>
    </source>
</evidence>
<evidence type="ECO:0000256" key="2">
    <source>
        <dbReference type="SAM" id="MobiDB-lite"/>
    </source>
</evidence>
<comment type="function">
    <text evidence="1">Participates actively in the response to hyperosmotic and heat shock by preventing the aggregation of stress-denatured proteins, in association with DnaK and GrpE. It is the nucleotide exchange factor for DnaK and may function as a thermosensor. Unfolded proteins bind initially to DnaJ; upon interaction with the DnaJ-bound protein, DnaK hydrolyzes its bound ATP, resulting in the formation of a stable complex. GrpE releases ADP from DnaK; ATP binding to DnaK triggers the release of the substrate protein, thus completing the reaction cycle. Several rounds of ATP-dependent interactions between DnaJ, DnaK and GrpE are required for fully efficient folding.</text>
</comment>
<comment type="subunit">
    <text evidence="1">Homodimer.</text>
</comment>
<comment type="subcellular location">
    <subcellularLocation>
        <location evidence="1">Cytoplasm</location>
    </subcellularLocation>
</comment>
<comment type="similarity">
    <text evidence="1">Belongs to the GrpE family.</text>
</comment>
<protein>
    <recommendedName>
        <fullName evidence="1">Protein GrpE</fullName>
    </recommendedName>
    <alternativeName>
        <fullName evidence="1">HSP-70 cofactor</fullName>
    </alternativeName>
</protein>
<accession>Q8CXD2</accession>
<feature type="chain" id="PRO_0000113828" description="Protein GrpE">
    <location>
        <begin position="1"/>
        <end position="190"/>
    </location>
</feature>
<feature type="region of interest" description="Disordered" evidence="2">
    <location>
        <begin position="1"/>
        <end position="42"/>
    </location>
</feature>
<feature type="compositionally biased region" description="Acidic residues" evidence="2">
    <location>
        <begin position="26"/>
        <end position="42"/>
    </location>
</feature>
<sequence length="190" mass="22197">MNEKDNQTTSEPENEQEIIDVNDSGEQPEENETEQPQEEAVENDEIAKLQQEKDETYNRLVRLQAEFDNYKRRTLKEREADRKYKSQDLITELLPAIDNFERALQVEVTEENKSIIDGIMMVYRQLQEALTSQGVEPIKTEGEVFDPNLHHAVMQIEDENMDSNTVVEELQKGYQLKDRVIRPAMVKVNK</sequence>
<keyword id="KW-0143">Chaperone</keyword>
<keyword id="KW-0963">Cytoplasm</keyword>
<keyword id="KW-1185">Reference proteome</keyword>
<keyword id="KW-0346">Stress response</keyword>